<accession>P0C295</accession>
<sequence length="72" mass="8271">ADVPGNYPLNTYGNMYYCTILGENEFCRKVCKVHGVKYGYCFNSHCWCEYLEAKDVSVWNAAKNYCKNPVGK</sequence>
<organism>
    <name type="scientific">Androctonus crassicauda</name>
    <name type="common">Arabian fat-tailed scorpion</name>
    <dbReference type="NCBI Taxonomy" id="122909"/>
    <lineage>
        <taxon>Eukaryota</taxon>
        <taxon>Metazoa</taxon>
        <taxon>Ecdysozoa</taxon>
        <taxon>Arthropoda</taxon>
        <taxon>Chelicerata</taxon>
        <taxon>Arachnida</taxon>
        <taxon>Scorpiones</taxon>
        <taxon>Buthida</taxon>
        <taxon>Buthoidea</taxon>
        <taxon>Buthidae</taxon>
        <taxon>Androctonus</taxon>
    </lineage>
</organism>
<dbReference type="SMR" id="P0C295"/>
<dbReference type="GO" id="GO:0005576">
    <property type="term" value="C:extracellular region"/>
    <property type="evidence" value="ECO:0007669"/>
    <property type="project" value="UniProtKB-SubCell"/>
</dbReference>
<dbReference type="GO" id="GO:0019871">
    <property type="term" value="F:sodium channel inhibitor activity"/>
    <property type="evidence" value="ECO:0007669"/>
    <property type="project" value="InterPro"/>
</dbReference>
<dbReference type="GO" id="GO:0090729">
    <property type="term" value="F:toxin activity"/>
    <property type="evidence" value="ECO:0007669"/>
    <property type="project" value="UniProtKB-KW"/>
</dbReference>
<dbReference type="CDD" id="cd23106">
    <property type="entry name" value="neurotoxins_LC_scorpion"/>
    <property type="match status" value="1"/>
</dbReference>
<dbReference type="Gene3D" id="3.30.30.10">
    <property type="entry name" value="Knottin, scorpion toxin-like"/>
    <property type="match status" value="1"/>
</dbReference>
<dbReference type="InterPro" id="IPR044062">
    <property type="entry name" value="LCN-type_CS_alpha_beta_dom"/>
</dbReference>
<dbReference type="InterPro" id="IPR036574">
    <property type="entry name" value="Scorpion_toxin-like_sf"/>
</dbReference>
<dbReference type="InterPro" id="IPR002061">
    <property type="entry name" value="Scorpion_toxinL/defensin"/>
</dbReference>
<dbReference type="Pfam" id="PF00537">
    <property type="entry name" value="Toxin_3"/>
    <property type="match status" value="1"/>
</dbReference>
<dbReference type="SUPFAM" id="SSF57095">
    <property type="entry name" value="Scorpion toxin-like"/>
    <property type="match status" value="1"/>
</dbReference>
<dbReference type="PROSITE" id="PS51863">
    <property type="entry name" value="LCN_CSAB"/>
    <property type="match status" value="1"/>
</dbReference>
<keyword id="KW-1015">Disulfide bond</keyword>
<keyword id="KW-0872">Ion channel impairing toxin</keyword>
<keyword id="KW-0528">Neurotoxin</keyword>
<keyword id="KW-0964">Secreted</keyword>
<keyword id="KW-0800">Toxin</keyword>
<keyword id="KW-0738">Voltage-gated sodium channel impairing toxin</keyword>
<name>TX21_ANDCR</name>
<feature type="chain" id="PRO_0000271322" description="Toxin Acra II-1">
    <location>
        <begin position="1"/>
        <end position="72"/>
    </location>
</feature>
<feature type="domain" description="LCN-type CS-alpha/beta" evidence="2">
    <location>
        <begin position="3"/>
        <end position="67"/>
    </location>
</feature>
<feature type="disulfide bond" evidence="2">
    <location>
        <begin position="18"/>
        <end position="41"/>
    </location>
</feature>
<feature type="disulfide bond" evidence="2">
    <location>
        <begin position="27"/>
        <end position="46"/>
    </location>
</feature>
<feature type="disulfide bond" evidence="2">
    <location>
        <begin position="31"/>
        <end position="48"/>
    </location>
</feature>
<reference key="1">
    <citation type="journal article" date="2006" name="Toxicon">
        <title>Characterization of venom components from the scorpion Androctonus crassicauda of Turkey: peptides and genes.</title>
        <authorList>
            <person name="Caliskan F."/>
            <person name="Garcia B.I."/>
            <person name="Coronas F.I.V."/>
            <person name="Batista C.V.F."/>
            <person name="Zamudio F.Z."/>
            <person name="Possani L.D."/>
        </authorList>
    </citation>
    <scope>NUCLEOTIDE SEQUENCE [MRNA]</scope>
    <source>
        <tissue>Venom gland</tissue>
    </source>
</reference>
<protein>
    <recommendedName>
        <fullName>Toxin Acra II-1</fullName>
    </recommendedName>
</protein>
<evidence type="ECO:0000250" key="1"/>
<evidence type="ECO:0000255" key="2">
    <source>
        <dbReference type="PROSITE-ProRule" id="PRU01210"/>
    </source>
</evidence>
<evidence type="ECO:0000305" key="3"/>
<comment type="function">
    <text evidence="1">Binds to sodium channels (Nav) and affects the channel activation process.</text>
</comment>
<comment type="subcellular location">
    <subcellularLocation>
        <location evidence="1">Secreted</location>
    </subcellularLocation>
</comment>
<comment type="tissue specificity">
    <text>Expressed by the venom gland.</text>
</comment>
<comment type="domain">
    <text evidence="3">Has the structural arrangement of an alpha-helix connected to antiparallel beta-sheets by disulfide bonds (CS-alpha/beta).</text>
</comment>
<comment type="similarity">
    <text evidence="3">Belongs to the long (3 C-C) scorpion toxin superfamily. Sodium channel inhibitor family. Beta subfamily.</text>
</comment>
<proteinExistence type="evidence at transcript level"/>